<reference key="1">
    <citation type="submission" date="2007-11" db="EMBL/GenBank/DDBJ databases">
        <title>Genome sequencing of phylogenetically and phenotypically diverse Coxiella burnetii isolates.</title>
        <authorList>
            <person name="Seshadri R."/>
            <person name="Samuel J.E."/>
        </authorList>
    </citation>
    <scope>NUCLEOTIDE SEQUENCE [LARGE SCALE GENOMIC DNA]</scope>
    <source>
        <strain>RSA 331 / Henzerling II</strain>
    </source>
</reference>
<protein>
    <recommendedName>
        <fullName evidence="1">UPF0301 protein COXBURSA331_A2219</fullName>
    </recommendedName>
</protein>
<evidence type="ECO:0000255" key="1">
    <source>
        <dbReference type="HAMAP-Rule" id="MF_00758"/>
    </source>
</evidence>
<dbReference type="EMBL" id="CP000890">
    <property type="protein sequence ID" value="ABX78171.1"/>
    <property type="molecule type" value="Genomic_DNA"/>
</dbReference>
<dbReference type="RefSeq" id="WP_005773009.1">
    <property type="nucleotide sequence ID" value="NC_010117.1"/>
</dbReference>
<dbReference type="SMR" id="A9NBU1"/>
<dbReference type="KEGG" id="cbs:COXBURSA331_A2219"/>
<dbReference type="HOGENOM" id="CLU_057596_1_0_6"/>
<dbReference type="GO" id="GO:0005829">
    <property type="term" value="C:cytosol"/>
    <property type="evidence" value="ECO:0007669"/>
    <property type="project" value="TreeGrafter"/>
</dbReference>
<dbReference type="Gene3D" id="3.40.1740.10">
    <property type="entry name" value="VC0467-like"/>
    <property type="match status" value="1"/>
</dbReference>
<dbReference type="HAMAP" id="MF_00758">
    <property type="entry name" value="UPF0301"/>
    <property type="match status" value="1"/>
</dbReference>
<dbReference type="InterPro" id="IPR003774">
    <property type="entry name" value="AlgH-like"/>
</dbReference>
<dbReference type="NCBIfam" id="NF001266">
    <property type="entry name" value="PRK00228.1-1"/>
    <property type="match status" value="1"/>
</dbReference>
<dbReference type="PANTHER" id="PTHR30327">
    <property type="entry name" value="UNCHARACTERIZED PROTEIN YQGE"/>
    <property type="match status" value="1"/>
</dbReference>
<dbReference type="PANTHER" id="PTHR30327:SF1">
    <property type="entry name" value="UPF0301 PROTEIN YQGE"/>
    <property type="match status" value="1"/>
</dbReference>
<dbReference type="Pfam" id="PF02622">
    <property type="entry name" value="DUF179"/>
    <property type="match status" value="1"/>
</dbReference>
<dbReference type="SUPFAM" id="SSF143456">
    <property type="entry name" value="VC0467-like"/>
    <property type="match status" value="1"/>
</dbReference>
<comment type="similarity">
    <text evidence="1">Belongs to the UPF0301 (AlgH) family.</text>
</comment>
<sequence length="181" mass="19901">MVKTNILSNHFLVAMPQLNDFTFTKAVIYVSQHDAKGALGIIINRPLALTLGKVLEHLNIEIAQPQIANHPVLMGGPIGQEHGFIVYEQESPQGAEILLSASKDMLDDIAKNKGPDDFLITLGYAGWEAGQLENEIARNDWLVVPFNRKILFETPLKSRWQKAAALIGVDINQLSGQIGHA</sequence>
<accession>A9NBU1</accession>
<organism>
    <name type="scientific">Coxiella burnetii (strain RSA 331 / Henzerling II)</name>
    <dbReference type="NCBI Taxonomy" id="360115"/>
    <lineage>
        <taxon>Bacteria</taxon>
        <taxon>Pseudomonadati</taxon>
        <taxon>Pseudomonadota</taxon>
        <taxon>Gammaproteobacteria</taxon>
        <taxon>Legionellales</taxon>
        <taxon>Coxiellaceae</taxon>
        <taxon>Coxiella</taxon>
    </lineage>
</organism>
<gene>
    <name type="ordered locus">COXBURSA331_A2219</name>
</gene>
<proteinExistence type="inferred from homology"/>
<feature type="chain" id="PRO_1000083509" description="UPF0301 protein COXBURSA331_A2219">
    <location>
        <begin position="1"/>
        <end position="181"/>
    </location>
</feature>
<name>Y2219_COXBR</name>